<evidence type="ECO:0000255" key="1">
    <source>
        <dbReference type="HAMAP-Rule" id="MF_01047"/>
    </source>
</evidence>
<comment type="similarity">
    <text evidence="1">Belongs to the UPF0227 family.</text>
</comment>
<reference key="1">
    <citation type="journal article" date="2011" name="J. Bacteriol.">
        <title>Comparative genomics of 28 Salmonella enterica isolates: evidence for CRISPR-mediated adaptive sublineage evolution.</title>
        <authorList>
            <person name="Fricke W.F."/>
            <person name="Mammel M.K."/>
            <person name="McDermott P.F."/>
            <person name="Tartera C."/>
            <person name="White D.G."/>
            <person name="Leclerc J.E."/>
            <person name="Ravel J."/>
            <person name="Cebula T.A."/>
        </authorList>
    </citation>
    <scope>NUCLEOTIDE SEQUENCE [LARGE SCALE GENOMIC DNA]</scope>
    <source>
        <strain>SL476</strain>
    </source>
</reference>
<name>YCFP_SALHS</name>
<gene>
    <name evidence="1" type="primary">ycfP</name>
    <name type="ordered locus">SeHA_C1324</name>
</gene>
<sequence length="180" mass="21077">MIIYLHGFDSNSPGNHEKVLQLQFIDPDVRLVSYSTRHPKHDMQHLLKEVDKMLQLNVDERPLICGVGLGGYWAERIGFLCDIRQVVFNPNLFPYENMEGKIDRPEEYADIATKCVTNFREKNRDRCLVILSRHDEALDSQRSAQALHPFYEIVWDEEQTHKFKNISPHLQRIKAFKTLG</sequence>
<organism>
    <name type="scientific">Salmonella heidelberg (strain SL476)</name>
    <dbReference type="NCBI Taxonomy" id="454169"/>
    <lineage>
        <taxon>Bacteria</taxon>
        <taxon>Pseudomonadati</taxon>
        <taxon>Pseudomonadota</taxon>
        <taxon>Gammaproteobacteria</taxon>
        <taxon>Enterobacterales</taxon>
        <taxon>Enterobacteriaceae</taxon>
        <taxon>Salmonella</taxon>
    </lineage>
</organism>
<proteinExistence type="inferred from homology"/>
<feature type="chain" id="PRO_1000136198" description="UPF0227 protein YcfP">
    <location>
        <begin position="1"/>
        <end position="180"/>
    </location>
</feature>
<dbReference type="EMBL" id="CP001120">
    <property type="protein sequence ID" value="ACF68200.1"/>
    <property type="molecule type" value="Genomic_DNA"/>
</dbReference>
<dbReference type="RefSeq" id="WP_000587943.1">
    <property type="nucleotide sequence ID" value="NC_011083.1"/>
</dbReference>
<dbReference type="SMR" id="B4TFI5"/>
<dbReference type="ESTHER" id="salty-ycfp">
    <property type="family name" value="abh_upf00227"/>
</dbReference>
<dbReference type="KEGG" id="seh:SeHA_C1324"/>
<dbReference type="HOGENOM" id="CLU_128769_0_0_6"/>
<dbReference type="Proteomes" id="UP000001866">
    <property type="component" value="Chromosome"/>
</dbReference>
<dbReference type="FunFam" id="3.40.50.1820:FF:000007">
    <property type="entry name" value="UPF0227 protein YcfP"/>
    <property type="match status" value="1"/>
</dbReference>
<dbReference type="Gene3D" id="3.40.50.1820">
    <property type="entry name" value="alpha/beta hydrolase"/>
    <property type="match status" value="1"/>
</dbReference>
<dbReference type="HAMAP" id="MF_01047">
    <property type="entry name" value="UPF0227"/>
    <property type="match status" value="1"/>
</dbReference>
<dbReference type="InterPro" id="IPR029058">
    <property type="entry name" value="AB_hydrolase_fold"/>
</dbReference>
<dbReference type="InterPro" id="IPR022987">
    <property type="entry name" value="UPF0227"/>
</dbReference>
<dbReference type="InterPro" id="IPR008886">
    <property type="entry name" value="UPF0227/Esterase_YqiA"/>
</dbReference>
<dbReference type="NCBIfam" id="NF003431">
    <property type="entry name" value="PRK04940.1"/>
    <property type="match status" value="1"/>
</dbReference>
<dbReference type="PANTHER" id="PTHR35602">
    <property type="entry name" value="ESTERASE YQIA-RELATED"/>
    <property type="match status" value="1"/>
</dbReference>
<dbReference type="PANTHER" id="PTHR35602:SF2">
    <property type="entry name" value="UPF0227 PROTEIN YCFP"/>
    <property type="match status" value="1"/>
</dbReference>
<dbReference type="Pfam" id="PF05728">
    <property type="entry name" value="UPF0227"/>
    <property type="match status" value="1"/>
</dbReference>
<dbReference type="SUPFAM" id="SSF53474">
    <property type="entry name" value="alpha/beta-Hydrolases"/>
    <property type="match status" value="1"/>
</dbReference>
<protein>
    <recommendedName>
        <fullName evidence="1">UPF0227 protein YcfP</fullName>
    </recommendedName>
</protein>
<accession>B4TFI5</accession>